<name>PSBD_OENGL</name>
<evidence type="ECO:0000250" key="1">
    <source>
        <dbReference type="UniProtKB" id="P56761"/>
    </source>
</evidence>
<evidence type="ECO:0000255" key="2">
    <source>
        <dbReference type="HAMAP-Rule" id="MF_01383"/>
    </source>
</evidence>
<feature type="initiator methionine" description="Removed" evidence="1">
    <location>
        <position position="1"/>
    </location>
</feature>
<feature type="chain" id="PRO_0000359677" description="Photosystem II D2 protein">
    <location>
        <begin position="2"/>
        <end position="353"/>
    </location>
</feature>
<feature type="transmembrane region" description="Helical" evidence="2">
    <location>
        <begin position="41"/>
        <end position="61"/>
    </location>
</feature>
<feature type="transmembrane region" description="Helical" evidence="2">
    <location>
        <begin position="125"/>
        <end position="141"/>
    </location>
</feature>
<feature type="transmembrane region" description="Helical" evidence="2">
    <location>
        <begin position="153"/>
        <end position="166"/>
    </location>
</feature>
<feature type="transmembrane region" description="Helical" evidence="2">
    <location>
        <begin position="208"/>
        <end position="228"/>
    </location>
</feature>
<feature type="transmembrane region" description="Helical" evidence="2">
    <location>
        <begin position="279"/>
        <end position="295"/>
    </location>
</feature>
<feature type="binding site" description="axial binding residue" evidence="2">
    <location>
        <position position="118"/>
    </location>
    <ligand>
        <name>chlorophyll a</name>
        <dbReference type="ChEBI" id="CHEBI:58416"/>
        <label>ChlzD2</label>
    </ligand>
    <ligandPart>
        <name>Mg</name>
        <dbReference type="ChEBI" id="CHEBI:25107"/>
    </ligandPart>
</feature>
<feature type="binding site" evidence="2">
    <location>
        <position position="130"/>
    </location>
    <ligand>
        <name>pheophytin a</name>
        <dbReference type="ChEBI" id="CHEBI:136840"/>
        <label>D2</label>
    </ligand>
</feature>
<feature type="binding site" evidence="2">
    <location>
        <position position="143"/>
    </location>
    <ligand>
        <name>pheophytin a</name>
        <dbReference type="ChEBI" id="CHEBI:136840"/>
        <label>D2</label>
    </ligand>
</feature>
<feature type="binding site" description="axial binding residue" evidence="2">
    <location>
        <position position="198"/>
    </location>
    <ligand>
        <name>chlorophyll a</name>
        <dbReference type="ChEBI" id="CHEBI:58416"/>
        <label>PD2</label>
    </ligand>
    <ligandPart>
        <name>Mg</name>
        <dbReference type="ChEBI" id="CHEBI:25107"/>
    </ligandPart>
</feature>
<feature type="binding site" evidence="2">
    <location>
        <position position="215"/>
    </location>
    <ligand>
        <name>a plastoquinone</name>
        <dbReference type="ChEBI" id="CHEBI:17757"/>
        <label>Q(A)</label>
    </ligand>
</feature>
<feature type="binding site" evidence="2">
    <location>
        <position position="215"/>
    </location>
    <ligand>
        <name>Fe cation</name>
        <dbReference type="ChEBI" id="CHEBI:24875"/>
        <note>ligand shared with heterodimeric partner</note>
    </ligand>
</feature>
<feature type="binding site" evidence="2">
    <location>
        <position position="262"/>
    </location>
    <ligand>
        <name>a plastoquinone</name>
        <dbReference type="ChEBI" id="CHEBI:17757"/>
        <label>Q(A)</label>
    </ligand>
</feature>
<feature type="binding site" evidence="2">
    <location>
        <position position="269"/>
    </location>
    <ligand>
        <name>Fe cation</name>
        <dbReference type="ChEBI" id="CHEBI:24875"/>
        <note>ligand shared with heterodimeric partner</note>
    </ligand>
</feature>
<feature type="modified residue" description="N-acetylthreonine" evidence="1">
    <location>
        <position position="2"/>
    </location>
</feature>
<feature type="modified residue" description="Phosphothreonine" evidence="1">
    <location>
        <position position="2"/>
    </location>
</feature>
<dbReference type="EC" id="1.10.3.9" evidence="2"/>
<dbReference type="EMBL" id="EU262890">
    <property type="protein sequence ID" value="ABX10033.1"/>
    <property type="molecule type" value="Genomic_DNA"/>
</dbReference>
<dbReference type="RefSeq" id="YP_001687279.1">
    <property type="nucleotide sequence ID" value="NC_010360.2"/>
</dbReference>
<dbReference type="SMR" id="B0Z540"/>
<dbReference type="GeneID" id="5955289"/>
<dbReference type="GO" id="GO:0009535">
    <property type="term" value="C:chloroplast thylakoid membrane"/>
    <property type="evidence" value="ECO:0007669"/>
    <property type="project" value="UniProtKB-SubCell"/>
</dbReference>
<dbReference type="GO" id="GO:0009523">
    <property type="term" value="C:photosystem II"/>
    <property type="evidence" value="ECO:0007669"/>
    <property type="project" value="UniProtKB-KW"/>
</dbReference>
<dbReference type="GO" id="GO:0016168">
    <property type="term" value="F:chlorophyll binding"/>
    <property type="evidence" value="ECO:0007669"/>
    <property type="project" value="UniProtKB-UniRule"/>
</dbReference>
<dbReference type="GO" id="GO:0045156">
    <property type="term" value="F:electron transporter, transferring electrons within the cyclic electron transport pathway of photosynthesis activity"/>
    <property type="evidence" value="ECO:0007669"/>
    <property type="project" value="InterPro"/>
</dbReference>
<dbReference type="GO" id="GO:0005506">
    <property type="term" value="F:iron ion binding"/>
    <property type="evidence" value="ECO:0007669"/>
    <property type="project" value="UniProtKB-UniRule"/>
</dbReference>
<dbReference type="GO" id="GO:0010242">
    <property type="term" value="F:oxygen evolving activity"/>
    <property type="evidence" value="ECO:0007669"/>
    <property type="project" value="UniProtKB-EC"/>
</dbReference>
<dbReference type="GO" id="GO:0009772">
    <property type="term" value="P:photosynthetic electron transport in photosystem II"/>
    <property type="evidence" value="ECO:0007669"/>
    <property type="project" value="InterPro"/>
</dbReference>
<dbReference type="CDD" id="cd09288">
    <property type="entry name" value="Photosystem-II_D2"/>
    <property type="match status" value="1"/>
</dbReference>
<dbReference type="FunFam" id="1.20.85.10:FF:000001">
    <property type="entry name" value="photosystem II D2 protein-like"/>
    <property type="match status" value="1"/>
</dbReference>
<dbReference type="Gene3D" id="1.20.85.10">
    <property type="entry name" value="Photosystem II protein D1-like"/>
    <property type="match status" value="1"/>
</dbReference>
<dbReference type="HAMAP" id="MF_01383">
    <property type="entry name" value="PSII_PsbD_D2"/>
    <property type="match status" value="1"/>
</dbReference>
<dbReference type="InterPro" id="IPR055266">
    <property type="entry name" value="D1/D2"/>
</dbReference>
<dbReference type="InterPro" id="IPR036854">
    <property type="entry name" value="Photo_II_D1/D2_sf"/>
</dbReference>
<dbReference type="InterPro" id="IPR000484">
    <property type="entry name" value="Photo_RC_L/M"/>
</dbReference>
<dbReference type="InterPro" id="IPR055265">
    <property type="entry name" value="Photo_RC_L/M_CS"/>
</dbReference>
<dbReference type="InterPro" id="IPR005868">
    <property type="entry name" value="PSII_PsbD/D2"/>
</dbReference>
<dbReference type="NCBIfam" id="TIGR01152">
    <property type="entry name" value="psbD"/>
    <property type="match status" value="1"/>
</dbReference>
<dbReference type="PANTHER" id="PTHR33149:SF57">
    <property type="entry name" value="PHOTOSYSTEM II D2 PROTEIN"/>
    <property type="match status" value="1"/>
</dbReference>
<dbReference type="PANTHER" id="PTHR33149">
    <property type="entry name" value="PHOTOSYSTEM II PROTEIN D1"/>
    <property type="match status" value="1"/>
</dbReference>
<dbReference type="Pfam" id="PF00124">
    <property type="entry name" value="Photo_RC"/>
    <property type="match status" value="1"/>
</dbReference>
<dbReference type="PRINTS" id="PR00256">
    <property type="entry name" value="REACTNCENTRE"/>
</dbReference>
<dbReference type="SUPFAM" id="SSF81483">
    <property type="entry name" value="Bacterial photosystem II reaction centre, L and M subunits"/>
    <property type="match status" value="1"/>
</dbReference>
<dbReference type="PROSITE" id="PS00244">
    <property type="entry name" value="REACTION_CENTER"/>
    <property type="match status" value="1"/>
</dbReference>
<reference key="1">
    <citation type="journal article" date="2008" name="Nucleic Acids Res.">
        <title>The complete nucleotide sequences of the five genetically distinct plastid genomes of Oenothera, subsection Oenothera: I. Sequence evaluation and plastome evolution.</title>
        <authorList>
            <person name="Greiner S."/>
            <person name="Wang X."/>
            <person name="Rauwolf U."/>
            <person name="Silber M.V."/>
            <person name="Mayer K."/>
            <person name="Meurer J."/>
            <person name="Haberer G."/>
            <person name="Herrmann R.G."/>
        </authorList>
    </citation>
    <scope>NUCLEOTIDE SEQUENCE [LARGE SCALE GENOMIC DNA]</scope>
    <source>
        <strain>cv. Rr-lamarckiana Sweden</strain>
    </source>
</reference>
<keyword id="KW-0007">Acetylation</keyword>
<keyword id="KW-0148">Chlorophyll</keyword>
<keyword id="KW-0150">Chloroplast</keyword>
<keyword id="KW-0157">Chromophore</keyword>
<keyword id="KW-0249">Electron transport</keyword>
<keyword id="KW-0408">Iron</keyword>
<keyword id="KW-0460">Magnesium</keyword>
<keyword id="KW-0472">Membrane</keyword>
<keyword id="KW-0479">Metal-binding</keyword>
<keyword id="KW-0560">Oxidoreductase</keyword>
<keyword id="KW-0597">Phosphoprotein</keyword>
<keyword id="KW-0602">Photosynthesis</keyword>
<keyword id="KW-0604">Photosystem II</keyword>
<keyword id="KW-0934">Plastid</keyword>
<keyword id="KW-0793">Thylakoid</keyword>
<keyword id="KW-0812">Transmembrane</keyword>
<keyword id="KW-1133">Transmembrane helix</keyword>
<keyword id="KW-0813">Transport</keyword>
<organism>
    <name type="scientific">Oenothera glazioviana</name>
    <name type="common">Large-flowered evening primrose</name>
    <name type="synonym">Oenothera erythrosepala</name>
    <dbReference type="NCBI Taxonomy" id="482428"/>
    <lineage>
        <taxon>Eukaryota</taxon>
        <taxon>Viridiplantae</taxon>
        <taxon>Streptophyta</taxon>
        <taxon>Embryophyta</taxon>
        <taxon>Tracheophyta</taxon>
        <taxon>Spermatophyta</taxon>
        <taxon>Magnoliopsida</taxon>
        <taxon>eudicotyledons</taxon>
        <taxon>Gunneridae</taxon>
        <taxon>Pentapetalae</taxon>
        <taxon>rosids</taxon>
        <taxon>malvids</taxon>
        <taxon>Myrtales</taxon>
        <taxon>Onagraceae</taxon>
        <taxon>Onagroideae</taxon>
        <taxon>Onagreae</taxon>
        <taxon>Oenothera</taxon>
    </lineage>
</organism>
<gene>
    <name evidence="2" type="primary">psbD</name>
</gene>
<protein>
    <recommendedName>
        <fullName evidence="2">Photosystem II D2 protein</fullName>
        <shortName evidence="2">PSII D2 protein</shortName>
        <ecNumber evidence="2">1.10.3.9</ecNumber>
    </recommendedName>
    <alternativeName>
        <fullName evidence="2">Photosystem Q(A) protein</fullName>
    </alternativeName>
</protein>
<comment type="function">
    <text evidence="2">Photosystem II (PSII) is a light-driven water:plastoquinone oxidoreductase that uses light energy to abstract electrons from H(2)O, generating O(2) and a proton gradient subsequently used for ATP formation. It consists of a core antenna complex that captures photons, and an electron transfer chain that converts photonic excitation into a charge separation. The D1/D2 (PsbA/PsbD) reaction center heterodimer binds P680, the primary electron donor of PSII as well as several subsequent electron acceptors. D2 is needed for assembly of a stable PSII complex.</text>
</comment>
<comment type="catalytic activity">
    <reaction evidence="2">
        <text>2 a plastoquinone + 4 hnu + 2 H2O = 2 a plastoquinol + O2</text>
        <dbReference type="Rhea" id="RHEA:36359"/>
        <dbReference type="Rhea" id="RHEA-COMP:9561"/>
        <dbReference type="Rhea" id="RHEA-COMP:9562"/>
        <dbReference type="ChEBI" id="CHEBI:15377"/>
        <dbReference type="ChEBI" id="CHEBI:15379"/>
        <dbReference type="ChEBI" id="CHEBI:17757"/>
        <dbReference type="ChEBI" id="CHEBI:30212"/>
        <dbReference type="ChEBI" id="CHEBI:62192"/>
        <dbReference type="EC" id="1.10.3.9"/>
    </reaction>
</comment>
<comment type="cofactor">
    <text evidence="2">The D1/D2 heterodimer binds P680, chlorophylls that are the primary electron donor of PSII, and subsequent electron acceptors. It shares a non-heme iron and each subunit binds pheophytin, quinone, additional chlorophylls, carotenoids and lipids. There is also a Cl(-1) ion associated with D1 and D2, which is required for oxygen evolution. The PSII complex binds additional chlorophylls, carotenoids and specific lipids.</text>
</comment>
<comment type="subunit">
    <text evidence="2">PSII is composed of 1 copy each of membrane proteins PsbA, PsbB, PsbC, PsbD, PsbE, PsbF, PsbH, PsbI, PsbJ, PsbK, PsbL, PsbM, PsbT, PsbX, PsbY, PsbZ, Psb30/Ycf12, at least 3 peripheral proteins of the oxygen-evolving complex and a large number of cofactors. It forms dimeric complexes.</text>
</comment>
<comment type="subcellular location">
    <subcellularLocation>
        <location evidence="2">Plastid</location>
        <location evidence="2">Chloroplast thylakoid membrane</location>
        <topology evidence="2">Multi-pass membrane protein</topology>
    </subcellularLocation>
</comment>
<comment type="miscellaneous">
    <text evidence="2">2 of the reaction center chlorophylls (ChlD1 and ChlD2) are entirely coordinated by water.</text>
</comment>
<comment type="similarity">
    <text evidence="2">Belongs to the reaction center PufL/M/PsbA/D family.</text>
</comment>
<geneLocation type="chloroplast"/>
<sequence length="353" mass="39578">MTIALGKFTKDEKDLFDIMDDWLRRDRFVFVGWSGLLLFPCAYFALGGWFTGTTFVTSWYTHGLASSYLEGCNFLTAAVSTPANSLAHSLLLLWGPEAQGDFTRWCQLGGLWTFVALHGAFALIGFMLRQFEIARSVQLRPYNAIAFSGPIAVFVSVFLIYPLGQSGWFFAPSFGVAAIFRFILFFQGFHNWTLNPFHMMGVAGVLGAALLCAIHGATVENTLFEDGDGANTFRAFNPTQAEETYSMVTANRFWSQIFGVAFSNKRWLHFFMLFVPVTGLWMSALGVVGLALNLRAYDFVSQEIRAAEDPEFETFYTKNILLNEGIRAWMAAQDQPHENLIFPEEVLPRGNAL</sequence>
<proteinExistence type="inferred from homology"/>
<accession>B0Z540</accession>